<feature type="signal peptide" evidence="2">
    <location>
        <begin position="1"/>
        <end position="19"/>
    </location>
</feature>
<feature type="chain" id="PRO_0000015018" description="Neural cell adhesion molecule 2">
    <location>
        <begin position="20"/>
        <end position="837"/>
    </location>
</feature>
<feature type="topological domain" description="Extracellular" evidence="2">
    <location>
        <begin position="20"/>
        <end position="697"/>
    </location>
</feature>
<feature type="transmembrane region" description="Helical" evidence="2">
    <location>
        <begin position="698"/>
        <end position="718"/>
    </location>
</feature>
<feature type="topological domain" description="Cytoplasmic" evidence="2">
    <location>
        <begin position="719"/>
        <end position="837"/>
    </location>
</feature>
<feature type="domain" description="Ig-like C2-type 1">
    <location>
        <begin position="21"/>
        <end position="108"/>
    </location>
</feature>
<feature type="domain" description="Ig-like C2-type 2">
    <location>
        <begin position="113"/>
        <end position="202"/>
    </location>
</feature>
<feature type="domain" description="Ig-like C2-type 3">
    <location>
        <begin position="208"/>
        <end position="297"/>
    </location>
</feature>
<feature type="domain" description="Ig-like C2-type 4">
    <location>
        <begin position="302"/>
        <end position="396"/>
    </location>
</feature>
<feature type="domain" description="Ig-like C2-type 5">
    <location>
        <begin position="401"/>
        <end position="491"/>
    </location>
</feature>
<feature type="domain" description="Fibronectin type-III 1" evidence="3">
    <location>
        <begin position="498"/>
        <end position="591"/>
    </location>
</feature>
<feature type="domain" description="Fibronectin type-III 2" evidence="3">
    <location>
        <begin position="593"/>
        <end position="688"/>
    </location>
</feature>
<feature type="region of interest" description="Disordered" evidence="4">
    <location>
        <begin position="764"/>
        <end position="818"/>
    </location>
</feature>
<feature type="compositionally biased region" description="Basic and acidic residues" evidence="4">
    <location>
        <begin position="764"/>
        <end position="785"/>
    </location>
</feature>
<feature type="compositionally biased region" description="Low complexity" evidence="4">
    <location>
        <begin position="789"/>
        <end position="798"/>
    </location>
</feature>
<feature type="compositionally biased region" description="Basic and acidic residues" evidence="4">
    <location>
        <begin position="799"/>
        <end position="814"/>
    </location>
</feature>
<feature type="modified residue" description="Phosphoserine" evidence="1">
    <location>
        <position position="765"/>
    </location>
</feature>
<feature type="modified residue" description="Phosphothreonine" evidence="1">
    <location>
        <position position="780"/>
    </location>
</feature>
<feature type="modified residue" description="Phosphoserine" evidence="1">
    <location>
        <position position="786"/>
    </location>
</feature>
<feature type="glycosylation site" description="N-linked (GlcNAc...) asparagine" evidence="2">
    <location>
        <position position="177"/>
    </location>
</feature>
<feature type="glycosylation site" description="N-linked (GlcNAc...) asparagine" evidence="2">
    <location>
        <position position="219"/>
    </location>
</feature>
<feature type="glycosylation site" description="N-linked (GlcNAc...) asparagine" evidence="2">
    <location>
        <position position="309"/>
    </location>
</feature>
<feature type="glycosylation site" description="N-linked (GlcNAc...) asparagine" evidence="2">
    <location>
        <position position="406"/>
    </location>
</feature>
<feature type="glycosylation site" description="N-linked (GlcNAc...) asparagine" evidence="2">
    <location>
        <position position="419"/>
    </location>
</feature>
<feature type="glycosylation site" description="N-linked (GlcNAc...) asparagine" evidence="5">
    <location>
        <position position="445"/>
    </location>
</feature>
<feature type="glycosylation site" description="N-linked (GlcNAc...) asparagine" evidence="2">
    <location>
        <position position="474"/>
    </location>
</feature>
<feature type="glycosylation site" description="N-linked (GlcNAc...) asparagine" evidence="5">
    <location>
        <position position="562"/>
    </location>
</feature>
<feature type="disulfide bond" evidence="8">
    <location>
        <begin position="42"/>
        <end position="93"/>
    </location>
</feature>
<feature type="disulfide bond" evidence="8">
    <location>
        <begin position="136"/>
        <end position="186"/>
    </location>
</feature>
<feature type="disulfide bond" evidence="8">
    <location>
        <begin position="232"/>
        <end position="281"/>
    </location>
</feature>
<feature type="disulfide bond" evidence="8">
    <location>
        <begin position="322"/>
        <end position="380"/>
    </location>
</feature>
<feature type="disulfide bond" evidence="8">
    <location>
        <begin position="422"/>
        <end position="475"/>
    </location>
</feature>
<feature type="splice variant" id="VSP_056637" description="In isoform 2." evidence="7">
    <original>MSLLLSFYLLGLLVSSGQ</original>
    <variation>MVRSDSGGQVYLDYHNRQGLFVDWKYNEALYLEEGQPETYYRT</variation>
    <location>
        <begin position="1"/>
        <end position="18"/>
    </location>
</feature>
<feature type="splice variant" id="VSP_056638" description="In isoform 2." evidence="7">
    <original>Y</original>
    <variation>S</variation>
    <location>
        <position position="399"/>
    </location>
</feature>
<feature type="splice variant" id="VSP_056639" description="In isoform 2." evidence="7">
    <location>
        <begin position="400"/>
        <end position="837"/>
    </location>
</feature>
<feature type="sequence variant" id="VAR_047897" description="In dbSNP:rs35654962.">
    <original>D</original>
    <variation>N</variation>
    <location>
        <position position="347"/>
    </location>
</feature>
<feature type="sequence variant" id="VAR_047898" description="In dbSNP:rs232518." evidence="6">
    <original>L</original>
    <variation>P</variation>
    <location>
        <position position="350"/>
    </location>
</feature>
<feature type="sequence conflict" description="In Ref. 1; AAB80803." evidence="8" ref="1">
    <original>E</original>
    <variation>R</variation>
    <location>
        <position position="49"/>
    </location>
</feature>
<feature type="sequence conflict" description="In Ref. 1; AAB80803." evidence="8" ref="1">
    <original>E</original>
    <variation>G</variation>
    <location>
        <position position="72"/>
    </location>
</feature>
<feature type="sequence conflict" description="In Ref. 1; AAB80803." evidence="8" ref="1">
    <original>F</original>
    <variation>L</variation>
    <location>
        <position position="163"/>
    </location>
</feature>
<feature type="sequence conflict" description="In Ref. 1; AAB80803." evidence="8" ref="1">
    <original>D</original>
    <variation>G</variation>
    <location>
        <position position="374"/>
    </location>
</feature>
<feature type="sequence conflict" description="In Ref. 1; AAB80803." evidence="8" ref="1">
    <original>YEVQIT</original>
    <variation>MKFRLP</variation>
    <location>
        <begin position="662"/>
        <end position="667"/>
    </location>
</feature>
<feature type="strand" evidence="15">
    <location>
        <begin position="20"/>
        <end position="26"/>
    </location>
</feature>
<feature type="strand" evidence="15">
    <location>
        <begin position="28"/>
        <end position="33"/>
    </location>
</feature>
<feature type="strand" evidence="15">
    <location>
        <begin position="38"/>
        <end position="46"/>
    </location>
</feature>
<feature type="strand" evidence="15">
    <location>
        <begin position="49"/>
        <end position="54"/>
    </location>
</feature>
<feature type="strand" evidence="15">
    <location>
        <begin position="65"/>
        <end position="72"/>
    </location>
</feature>
<feature type="strand" evidence="15">
    <location>
        <begin position="75"/>
        <end position="80"/>
    </location>
</feature>
<feature type="helix" evidence="15">
    <location>
        <begin position="85"/>
        <end position="87"/>
    </location>
</feature>
<feature type="strand" evidence="15">
    <location>
        <begin position="89"/>
        <end position="96"/>
    </location>
</feature>
<feature type="strand" evidence="13">
    <location>
        <begin position="98"/>
        <end position="100"/>
    </location>
</feature>
<feature type="strand" evidence="15">
    <location>
        <begin position="102"/>
        <end position="112"/>
    </location>
</feature>
<feature type="strand" evidence="12">
    <location>
        <begin position="116"/>
        <end position="119"/>
    </location>
</feature>
<feature type="strand" evidence="15">
    <location>
        <begin position="123"/>
        <end position="127"/>
    </location>
</feature>
<feature type="strand" evidence="15">
    <location>
        <begin position="132"/>
        <end position="134"/>
    </location>
</feature>
<feature type="strand" evidence="12">
    <location>
        <begin position="137"/>
        <end position="139"/>
    </location>
</feature>
<feature type="strand" evidence="15">
    <location>
        <begin position="145"/>
        <end position="150"/>
    </location>
</feature>
<feature type="strand" evidence="15">
    <location>
        <begin position="152"/>
        <end position="154"/>
    </location>
</feature>
<feature type="strand" evidence="15">
    <location>
        <begin position="163"/>
        <end position="165"/>
    </location>
</feature>
<feature type="strand" evidence="15">
    <location>
        <begin position="171"/>
        <end position="173"/>
    </location>
</feature>
<feature type="helix" evidence="15">
    <location>
        <begin position="178"/>
        <end position="180"/>
    </location>
</feature>
<feature type="strand" evidence="15">
    <location>
        <begin position="182"/>
        <end position="190"/>
    </location>
</feature>
<feature type="turn" evidence="15">
    <location>
        <begin position="191"/>
        <end position="194"/>
    </location>
</feature>
<feature type="strand" evidence="15">
    <location>
        <begin position="195"/>
        <end position="206"/>
    </location>
</feature>
<feature type="strand" evidence="14">
    <location>
        <begin position="210"/>
        <end position="212"/>
    </location>
</feature>
<feature type="strand" evidence="14">
    <location>
        <begin position="217"/>
        <end position="221"/>
    </location>
</feature>
<feature type="strand" evidence="13">
    <location>
        <begin position="222"/>
        <end position="224"/>
    </location>
</feature>
<feature type="strand" evidence="14">
    <location>
        <begin position="228"/>
        <end position="231"/>
    </location>
</feature>
<feature type="strand" evidence="14">
    <location>
        <begin position="233"/>
        <end position="235"/>
    </location>
</feature>
<feature type="strand" evidence="14">
    <location>
        <begin position="241"/>
        <end position="246"/>
    </location>
</feature>
<feature type="strand" evidence="14">
    <location>
        <begin position="254"/>
        <end position="260"/>
    </location>
</feature>
<feature type="turn" evidence="14">
    <location>
        <begin position="261"/>
        <end position="264"/>
    </location>
</feature>
<feature type="strand" evidence="14">
    <location>
        <begin position="265"/>
        <end position="268"/>
    </location>
</feature>
<feature type="helix" evidence="14">
    <location>
        <begin position="273"/>
        <end position="275"/>
    </location>
</feature>
<feature type="strand" evidence="14">
    <location>
        <begin position="277"/>
        <end position="285"/>
    </location>
</feature>
<feature type="strand" evidence="14">
    <location>
        <begin position="288"/>
        <end position="307"/>
    </location>
</feature>
<feature type="strand" evidence="14">
    <location>
        <begin position="310"/>
        <end position="312"/>
    </location>
</feature>
<feature type="strand" evidence="14">
    <location>
        <begin position="317"/>
        <end position="328"/>
    </location>
</feature>
<feature type="strand" evidence="14">
    <location>
        <begin position="331"/>
        <end position="336"/>
    </location>
</feature>
<feature type="turn" evidence="14">
    <location>
        <begin position="337"/>
        <end position="340"/>
    </location>
</feature>
<feature type="strand" evidence="14">
    <location>
        <begin position="341"/>
        <end position="343"/>
    </location>
</feature>
<feature type="strand" evidence="16">
    <location>
        <begin position="350"/>
        <end position="352"/>
    </location>
</feature>
<feature type="strand" evidence="14">
    <location>
        <begin position="354"/>
        <end position="359"/>
    </location>
</feature>
<feature type="strand" evidence="14">
    <location>
        <begin position="362"/>
        <end position="369"/>
    </location>
</feature>
<feature type="helix" evidence="14">
    <location>
        <begin position="372"/>
        <end position="374"/>
    </location>
</feature>
<feature type="strand" evidence="14">
    <location>
        <begin position="376"/>
        <end position="384"/>
    </location>
</feature>
<feature type="strand" evidence="14">
    <location>
        <begin position="387"/>
        <end position="397"/>
    </location>
</feature>
<feature type="strand" evidence="10">
    <location>
        <begin position="409"/>
        <end position="412"/>
    </location>
</feature>
<feature type="strand" evidence="10">
    <location>
        <begin position="418"/>
        <end position="422"/>
    </location>
</feature>
<feature type="strand" evidence="10">
    <location>
        <begin position="424"/>
        <end position="428"/>
    </location>
</feature>
<feature type="strand" evidence="10">
    <location>
        <begin position="431"/>
        <end position="436"/>
    </location>
</feature>
<feature type="strand" evidence="10">
    <location>
        <begin position="439"/>
        <end position="442"/>
    </location>
</feature>
<feature type="strand" evidence="10">
    <location>
        <begin position="449"/>
        <end position="453"/>
    </location>
</feature>
<feature type="strand" evidence="10">
    <location>
        <begin position="458"/>
        <end position="462"/>
    </location>
</feature>
<feature type="strand" evidence="10">
    <location>
        <begin position="469"/>
        <end position="479"/>
    </location>
</feature>
<feature type="strand" evidence="10">
    <location>
        <begin position="482"/>
        <end position="492"/>
    </location>
</feature>
<feature type="strand" evidence="10">
    <location>
        <begin position="500"/>
        <end position="507"/>
    </location>
</feature>
<feature type="strand" evidence="10">
    <location>
        <begin position="512"/>
        <end position="517"/>
    </location>
</feature>
<feature type="strand" evidence="10">
    <location>
        <begin position="527"/>
        <end position="536"/>
    </location>
</feature>
<feature type="strand" evidence="10">
    <location>
        <begin position="543"/>
        <end position="546"/>
    </location>
</feature>
<feature type="strand" evidence="9">
    <location>
        <begin position="548"/>
        <end position="550"/>
    </location>
</feature>
<feature type="strand" evidence="10">
    <location>
        <begin position="552"/>
        <end position="556"/>
    </location>
</feature>
<feature type="strand" evidence="10">
    <location>
        <begin position="564"/>
        <end position="575"/>
    </location>
</feature>
<feature type="strand" evidence="16">
    <location>
        <begin position="576"/>
        <end position="580"/>
    </location>
</feature>
<feature type="strand" evidence="10">
    <location>
        <begin position="584"/>
        <end position="587"/>
    </location>
</feature>
<feature type="strand" evidence="10">
    <location>
        <begin position="599"/>
        <end position="604"/>
    </location>
</feature>
<feature type="turn" evidence="10">
    <location>
        <begin position="605"/>
        <end position="607"/>
    </location>
</feature>
<feature type="strand" evidence="10">
    <location>
        <begin position="608"/>
        <end position="613"/>
    </location>
</feature>
<feature type="strand" evidence="11">
    <location>
        <begin position="619"/>
        <end position="621"/>
    </location>
</feature>
<feature type="strand" evidence="10">
    <location>
        <begin position="625"/>
        <end position="631"/>
    </location>
</feature>
<feature type="strand" evidence="11">
    <location>
        <begin position="640"/>
        <end position="645"/>
    </location>
</feature>
<feature type="turn" evidence="11">
    <location>
        <begin position="646"/>
        <end position="648"/>
    </location>
</feature>
<feature type="strand" evidence="10">
    <location>
        <begin position="650"/>
        <end position="653"/>
    </location>
</feature>
<feature type="strand" evidence="10">
    <location>
        <begin position="661"/>
        <end position="670"/>
    </location>
</feature>
<feature type="strand" evidence="10">
    <location>
        <begin position="678"/>
        <end position="683"/>
    </location>
</feature>
<evidence type="ECO:0000250" key="1">
    <source>
        <dbReference type="UniProtKB" id="O35136"/>
    </source>
</evidence>
<evidence type="ECO:0000255" key="2"/>
<evidence type="ECO:0000255" key="3">
    <source>
        <dbReference type="PROSITE-ProRule" id="PRU00316"/>
    </source>
</evidence>
<evidence type="ECO:0000256" key="4">
    <source>
        <dbReference type="SAM" id="MobiDB-lite"/>
    </source>
</evidence>
<evidence type="ECO:0000269" key="5">
    <source>
    </source>
</evidence>
<evidence type="ECO:0000269" key="6">
    <source>
    </source>
</evidence>
<evidence type="ECO:0000303" key="7">
    <source>
    </source>
</evidence>
<evidence type="ECO:0000305" key="8"/>
<evidence type="ECO:0007829" key="9">
    <source>
        <dbReference type="PDB" id="2DOC"/>
    </source>
</evidence>
<evidence type="ECO:0007829" key="10">
    <source>
        <dbReference type="PDB" id="2JLL"/>
    </source>
</evidence>
<evidence type="ECO:0007829" key="11">
    <source>
        <dbReference type="PDB" id="2KBG"/>
    </source>
</evidence>
<evidence type="ECO:0007829" key="12">
    <source>
        <dbReference type="PDB" id="2V5T"/>
    </source>
</evidence>
<evidence type="ECO:0007829" key="13">
    <source>
        <dbReference type="PDB" id="2WIM"/>
    </source>
</evidence>
<evidence type="ECO:0007829" key="14">
    <source>
        <dbReference type="PDB" id="2XY1"/>
    </source>
</evidence>
<evidence type="ECO:0007829" key="15">
    <source>
        <dbReference type="PDB" id="2XY2"/>
    </source>
</evidence>
<evidence type="ECO:0007829" key="16">
    <source>
        <dbReference type="PDB" id="2XYC"/>
    </source>
</evidence>
<reference key="1">
    <citation type="journal article" date="1997" name="Genomics">
        <title>Cloning of a novel human neural cell adhesion molecule gene (NCAM2) that maps to chromosome region 21q21 and is potentially involved in Down syndrome.</title>
        <authorList>
            <person name="Paoloni-Giacobino A."/>
            <person name="Chen H."/>
            <person name="Antonarakis S.E."/>
        </authorList>
    </citation>
    <scope>NUCLEOTIDE SEQUENCE [MRNA] (ISOFORM 1)</scope>
    <scope>VARIANT PRO-350</scope>
    <source>
        <tissue>Brain</tissue>
    </source>
</reference>
<reference key="2">
    <citation type="journal article" date="2004" name="Nat. Genet.">
        <title>Complete sequencing and characterization of 21,243 full-length human cDNAs.</title>
        <authorList>
            <person name="Ota T."/>
            <person name="Suzuki Y."/>
            <person name="Nishikawa T."/>
            <person name="Otsuki T."/>
            <person name="Sugiyama T."/>
            <person name="Irie R."/>
            <person name="Wakamatsu A."/>
            <person name="Hayashi K."/>
            <person name="Sato H."/>
            <person name="Nagai K."/>
            <person name="Kimura K."/>
            <person name="Makita H."/>
            <person name="Sekine M."/>
            <person name="Obayashi M."/>
            <person name="Nishi T."/>
            <person name="Shibahara T."/>
            <person name="Tanaka T."/>
            <person name="Ishii S."/>
            <person name="Yamamoto J."/>
            <person name="Saito K."/>
            <person name="Kawai Y."/>
            <person name="Isono Y."/>
            <person name="Nakamura Y."/>
            <person name="Nagahari K."/>
            <person name="Murakami K."/>
            <person name="Yasuda T."/>
            <person name="Iwayanagi T."/>
            <person name="Wagatsuma M."/>
            <person name="Shiratori A."/>
            <person name="Sudo H."/>
            <person name="Hosoiri T."/>
            <person name="Kaku Y."/>
            <person name="Kodaira H."/>
            <person name="Kondo H."/>
            <person name="Sugawara M."/>
            <person name="Takahashi M."/>
            <person name="Kanda K."/>
            <person name="Yokoi T."/>
            <person name="Furuya T."/>
            <person name="Kikkawa E."/>
            <person name="Omura Y."/>
            <person name="Abe K."/>
            <person name="Kamihara K."/>
            <person name="Katsuta N."/>
            <person name="Sato K."/>
            <person name="Tanikawa M."/>
            <person name="Yamazaki M."/>
            <person name="Ninomiya K."/>
            <person name="Ishibashi T."/>
            <person name="Yamashita H."/>
            <person name="Murakawa K."/>
            <person name="Fujimori K."/>
            <person name="Tanai H."/>
            <person name="Kimata M."/>
            <person name="Watanabe M."/>
            <person name="Hiraoka S."/>
            <person name="Chiba Y."/>
            <person name="Ishida S."/>
            <person name="Ono Y."/>
            <person name="Takiguchi S."/>
            <person name="Watanabe S."/>
            <person name="Yosida M."/>
            <person name="Hotuta T."/>
            <person name="Kusano J."/>
            <person name="Kanehori K."/>
            <person name="Takahashi-Fujii A."/>
            <person name="Hara H."/>
            <person name="Tanase T.-O."/>
            <person name="Nomura Y."/>
            <person name="Togiya S."/>
            <person name="Komai F."/>
            <person name="Hara R."/>
            <person name="Takeuchi K."/>
            <person name="Arita M."/>
            <person name="Imose N."/>
            <person name="Musashino K."/>
            <person name="Yuuki H."/>
            <person name="Oshima A."/>
            <person name="Sasaki N."/>
            <person name="Aotsuka S."/>
            <person name="Yoshikawa Y."/>
            <person name="Matsunawa H."/>
            <person name="Ichihara T."/>
            <person name="Shiohata N."/>
            <person name="Sano S."/>
            <person name="Moriya S."/>
            <person name="Momiyama H."/>
            <person name="Satoh N."/>
            <person name="Takami S."/>
            <person name="Terashima Y."/>
            <person name="Suzuki O."/>
            <person name="Nakagawa S."/>
            <person name="Senoh A."/>
            <person name="Mizoguchi H."/>
            <person name="Goto Y."/>
            <person name="Shimizu F."/>
            <person name="Wakebe H."/>
            <person name="Hishigaki H."/>
            <person name="Watanabe T."/>
            <person name="Sugiyama A."/>
            <person name="Takemoto M."/>
            <person name="Kawakami B."/>
            <person name="Yamazaki M."/>
            <person name="Watanabe K."/>
            <person name="Kumagai A."/>
            <person name="Itakura S."/>
            <person name="Fukuzumi Y."/>
            <person name="Fujimori Y."/>
            <person name="Komiyama M."/>
            <person name="Tashiro H."/>
            <person name="Tanigami A."/>
            <person name="Fujiwara T."/>
            <person name="Ono T."/>
            <person name="Yamada K."/>
            <person name="Fujii Y."/>
            <person name="Ozaki K."/>
            <person name="Hirao M."/>
            <person name="Ohmori Y."/>
            <person name="Kawabata A."/>
            <person name="Hikiji T."/>
            <person name="Kobatake N."/>
            <person name="Inagaki H."/>
            <person name="Ikema Y."/>
            <person name="Okamoto S."/>
            <person name="Okitani R."/>
            <person name="Kawakami T."/>
            <person name="Noguchi S."/>
            <person name="Itoh T."/>
            <person name="Shigeta K."/>
            <person name="Senba T."/>
            <person name="Matsumura K."/>
            <person name="Nakajima Y."/>
            <person name="Mizuno T."/>
            <person name="Morinaga M."/>
            <person name="Sasaki M."/>
            <person name="Togashi T."/>
            <person name="Oyama M."/>
            <person name="Hata H."/>
            <person name="Watanabe M."/>
            <person name="Komatsu T."/>
            <person name="Mizushima-Sugano J."/>
            <person name="Satoh T."/>
            <person name="Shirai Y."/>
            <person name="Takahashi Y."/>
            <person name="Nakagawa K."/>
            <person name="Okumura K."/>
            <person name="Nagase T."/>
            <person name="Nomura N."/>
            <person name="Kikuchi H."/>
            <person name="Masuho Y."/>
            <person name="Yamashita R."/>
            <person name="Nakai K."/>
            <person name="Yada T."/>
            <person name="Nakamura Y."/>
            <person name="Ohara O."/>
            <person name="Isogai T."/>
            <person name="Sugano S."/>
        </authorList>
    </citation>
    <scope>NUCLEOTIDE SEQUENCE [LARGE SCALE MRNA] (ISOFORM 2)</scope>
    <source>
        <tissue>Testis</tissue>
    </source>
</reference>
<reference key="3">
    <citation type="journal article" date="2000" name="Nature">
        <title>The DNA sequence of human chromosome 21.</title>
        <authorList>
            <person name="Hattori M."/>
            <person name="Fujiyama A."/>
            <person name="Taylor T.D."/>
            <person name="Watanabe H."/>
            <person name="Yada T."/>
            <person name="Park H.-S."/>
            <person name="Toyoda A."/>
            <person name="Ishii K."/>
            <person name="Totoki Y."/>
            <person name="Choi D.-K."/>
            <person name="Groner Y."/>
            <person name="Soeda E."/>
            <person name="Ohki M."/>
            <person name="Takagi T."/>
            <person name="Sakaki Y."/>
            <person name="Taudien S."/>
            <person name="Blechschmidt K."/>
            <person name="Polley A."/>
            <person name="Menzel U."/>
            <person name="Delabar J."/>
            <person name="Kumpf K."/>
            <person name="Lehmann R."/>
            <person name="Patterson D."/>
            <person name="Reichwald K."/>
            <person name="Rump A."/>
            <person name="Schillhabel M."/>
            <person name="Schudy A."/>
            <person name="Zimmermann W."/>
            <person name="Rosenthal A."/>
            <person name="Kudoh J."/>
            <person name="Shibuya K."/>
            <person name="Kawasaki K."/>
            <person name="Asakawa S."/>
            <person name="Shintani A."/>
            <person name="Sasaki T."/>
            <person name="Nagamine K."/>
            <person name="Mitsuyama S."/>
            <person name="Antonarakis S.E."/>
            <person name="Minoshima S."/>
            <person name="Shimizu N."/>
            <person name="Nordsiek G."/>
            <person name="Hornischer K."/>
            <person name="Brandt P."/>
            <person name="Scharfe M."/>
            <person name="Schoen O."/>
            <person name="Desario A."/>
            <person name="Reichelt J."/>
            <person name="Kauer G."/>
            <person name="Bloecker H."/>
            <person name="Ramser J."/>
            <person name="Beck A."/>
            <person name="Klages S."/>
            <person name="Hennig S."/>
            <person name="Riesselmann L."/>
            <person name="Dagand E."/>
            <person name="Wehrmeyer S."/>
            <person name="Borzym K."/>
            <person name="Gardiner K."/>
            <person name="Nizetic D."/>
            <person name="Francis F."/>
            <person name="Lehrach H."/>
            <person name="Reinhardt R."/>
            <person name="Yaspo M.-L."/>
        </authorList>
    </citation>
    <scope>NUCLEOTIDE SEQUENCE [LARGE SCALE GENOMIC DNA]</scope>
</reference>
<reference key="4">
    <citation type="journal article" date="2004" name="Genome Res.">
        <title>The status, quality, and expansion of the NIH full-length cDNA project: the Mammalian Gene Collection (MGC).</title>
        <authorList>
            <consortium name="The MGC Project Team"/>
        </authorList>
    </citation>
    <scope>NUCLEOTIDE SEQUENCE [LARGE SCALE MRNA] (ISOFORM 1)</scope>
    <source>
        <tissue>Brain</tissue>
    </source>
</reference>
<reference key="5">
    <citation type="journal article" date="2003" name="Nat. Biotechnol.">
        <title>Identification and quantification of N-linked glycoproteins using hydrazide chemistry, stable isotope labeling and mass spectrometry.</title>
        <authorList>
            <person name="Zhang H."/>
            <person name="Li X.-J."/>
            <person name="Martin D.B."/>
            <person name="Aebersold R."/>
        </authorList>
    </citation>
    <scope>GLYCOSYLATION AT ASN-445 AND ASN-562</scope>
</reference>
<reference key="6">
    <citation type="submission" date="2006-10" db="PDB data bank">
        <title>Solution structure of the fibronectin type-III domain of human neural cell adhesion molecule 2.</title>
        <authorList>
            <consortium name="RIKEN structural genomics initiative (RSGI)"/>
        </authorList>
    </citation>
    <scope>STRUCTURE BY NMR OF 486-591</scope>
</reference>
<organism>
    <name type="scientific">Homo sapiens</name>
    <name type="common">Human</name>
    <dbReference type="NCBI Taxonomy" id="9606"/>
    <lineage>
        <taxon>Eukaryota</taxon>
        <taxon>Metazoa</taxon>
        <taxon>Chordata</taxon>
        <taxon>Craniata</taxon>
        <taxon>Vertebrata</taxon>
        <taxon>Euteleostomi</taxon>
        <taxon>Mammalia</taxon>
        <taxon>Eutheria</taxon>
        <taxon>Euarchontoglires</taxon>
        <taxon>Primates</taxon>
        <taxon>Haplorrhini</taxon>
        <taxon>Catarrhini</taxon>
        <taxon>Hominidae</taxon>
        <taxon>Homo</taxon>
    </lineage>
</organism>
<proteinExistence type="evidence at protein level"/>
<protein>
    <recommendedName>
        <fullName>Neural cell adhesion molecule 2</fullName>
        <shortName>N-CAM-2</shortName>
        <shortName>NCAM-2</shortName>
    </recommendedName>
</protein>
<comment type="function">
    <text>May play important roles in selective fasciculation and zone-to-zone projection of the primary olfactory axons.</text>
</comment>
<comment type="interaction">
    <interactant intactId="EBI-2679983">
        <id>O15394</id>
    </interactant>
    <interactant intactId="EBI-2679983">
        <id>O15394</id>
        <label>NCAM2</label>
    </interactant>
    <organismsDiffer>false</organismsDiffer>
    <experiments>3</experiments>
</comment>
<comment type="subcellular location">
    <subcellularLocation>
        <location>Cell membrane</location>
        <topology>Single-pass type I membrane protein</topology>
    </subcellularLocation>
</comment>
<comment type="alternative products">
    <event type="alternative splicing"/>
    <isoform>
        <id>O15394-1</id>
        <name>1</name>
        <sequence type="displayed"/>
    </isoform>
    <isoform>
        <id>O15394-2</id>
        <name>2</name>
        <sequence type="described" ref="VSP_056637 VSP_056638 VSP_056639"/>
    </isoform>
</comment>
<comment type="tissue specificity">
    <text>Expressed most strongly in adult and fetal brain.</text>
</comment>
<gene>
    <name type="primary">NCAM2</name>
    <name type="synonym">NCAM21</name>
</gene>
<keyword id="KW-0002">3D-structure</keyword>
<keyword id="KW-0025">Alternative splicing</keyword>
<keyword id="KW-0130">Cell adhesion</keyword>
<keyword id="KW-1003">Cell membrane</keyword>
<keyword id="KW-1015">Disulfide bond</keyword>
<keyword id="KW-0325">Glycoprotein</keyword>
<keyword id="KW-0393">Immunoglobulin domain</keyword>
<keyword id="KW-0472">Membrane</keyword>
<keyword id="KW-0597">Phosphoprotein</keyword>
<keyword id="KW-1267">Proteomics identification</keyword>
<keyword id="KW-1185">Reference proteome</keyword>
<keyword id="KW-0677">Repeat</keyword>
<keyword id="KW-0732">Signal</keyword>
<keyword id="KW-0812">Transmembrane</keyword>
<keyword id="KW-1133">Transmembrane helix</keyword>
<name>NCAM2_HUMAN</name>
<dbReference type="EMBL" id="U75330">
    <property type="protein sequence ID" value="AAB80803.1"/>
    <property type="molecule type" value="mRNA"/>
</dbReference>
<dbReference type="EMBL" id="AK302870">
    <property type="protein sequence ID" value="BAH13827.1"/>
    <property type="molecule type" value="mRNA"/>
</dbReference>
<dbReference type="EMBL" id="AP001114">
    <property type="status" value="NOT_ANNOTATED_CDS"/>
    <property type="molecule type" value="Genomic_DNA"/>
</dbReference>
<dbReference type="EMBL" id="AP001115">
    <property type="status" value="NOT_ANNOTATED_CDS"/>
    <property type="molecule type" value="Genomic_DNA"/>
</dbReference>
<dbReference type="EMBL" id="AP001136">
    <property type="status" value="NOT_ANNOTATED_CDS"/>
    <property type="molecule type" value="Genomic_DNA"/>
</dbReference>
<dbReference type="EMBL" id="AP001137">
    <property type="status" value="NOT_ANNOTATED_CDS"/>
    <property type="molecule type" value="Genomic_DNA"/>
</dbReference>
<dbReference type="EMBL" id="AP001138">
    <property type="status" value="NOT_ANNOTATED_CDS"/>
    <property type="molecule type" value="Genomic_DNA"/>
</dbReference>
<dbReference type="EMBL" id="AP001252">
    <property type="status" value="NOT_ANNOTATED_CDS"/>
    <property type="molecule type" value="Genomic_DNA"/>
</dbReference>
<dbReference type="EMBL" id="BC052946">
    <property type="protein sequence ID" value="AAH52946.1"/>
    <property type="molecule type" value="mRNA"/>
</dbReference>
<dbReference type="CCDS" id="CCDS42910.1">
    <molecule id="O15394-1"/>
</dbReference>
<dbReference type="RefSeq" id="NP_001339526.1">
    <molecule id="O15394-2"/>
    <property type="nucleotide sequence ID" value="NM_001352597.2"/>
</dbReference>
<dbReference type="RefSeq" id="NP_004531.2">
    <molecule id="O15394-1"/>
    <property type="nucleotide sequence ID" value="NM_004540.3"/>
</dbReference>
<dbReference type="RefSeq" id="XP_016883847.1">
    <property type="nucleotide sequence ID" value="XM_017028358.1"/>
</dbReference>
<dbReference type="PDB" id="2DOC">
    <property type="method" value="NMR"/>
    <property type="chains" value="A=486-591"/>
</dbReference>
<dbReference type="PDB" id="2JLL">
    <property type="method" value="X-ray"/>
    <property type="resolution" value="2.30 A"/>
    <property type="chains" value="A=301-689"/>
</dbReference>
<dbReference type="PDB" id="2KBG">
    <property type="method" value="NMR"/>
    <property type="chains" value="A=592-693"/>
</dbReference>
<dbReference type="PDB" id="2V5T">
    <property type="method" value="X-ray"/>
    <property type="resolution" value="2.00 A"/>
    <property type="chains" value="A=115-301"/>
</dbReference>
<dbReference type="PDB" id="2VAJ">
    <property type="method" value="X-ray"/>
    <property type="resolution" value="2.70 A"/>
    <property type="chains" value="A=21-113"/>
</dbReference>
<dbReference type="PDB" id="2WIM">
    <property type="method" value="X-ray"/>
    <property type="resolution" value="3.00 A"/>
    <property type="chains" value="A/B=19-301"/>
</dbReference>
<dbReference type="PDB" id="2XY1">
    <property type="method" value="X-ray"/>
    <property type="resolution" value="1.90 A"/>
    <property type="chains" value="A=209-398"/>
</dbReference>
<dbReference type="PDB" id="2XY2">
    <property type="method" value="X-ray"/>
    <property type="resolution" value="1.77 A"/>
    <property type="chains" value="A=19-207"/>
</dbReference>
<dbReference type="PDB" id="2XYC">
    <property type="method" value="X-ray"/>
    <property type="resolution" value="2.65 A"/>
    <property type="chains" value="A=301-591"/>
</dbReference>
<dbReference type="PDBsum" id="2DOC"/>
<dbReference type="PDBsum" id="2JLL"/>
<dbReference type="PDBsum" id="2KBG"/>
<dbReference type="PDBsum" id="2V5T"/>
<dbReference type="PDBsum" id="2VAJ"/>
<dbReference type="PDBsum" id="2WIM"/>
<dbReference type="PDBsum" id="2XY1"/>
<dbReference type="PDBsum" id="2XY2"/>
<dbReference type="PDBsum" id="2XYC"/>
<dbReference type="SMR" id="O15394"/>
<dbReference type="BioGRID" id="110765">
    <property type="interactions" value="18"/>
</dbReference>
<dbReference type="DIP" id="DIP-56211N"/>
<dbReference type="FunCoup" id="O15394">
    <property type="interactions" value="1121"/>
</dbReference>
<dbReference type="IntAct" id="O15394">
    <property type="interactions" value="17"/>
</dbReference>
<dbReference type="STRING" id="9606.ENSP00000383392"/>
<dbReference type="UniLectin" id="O15394"/>
<dbReference type="GlyConnect" id="1546">
    <property type="glycosylation" value="7 N-Linked glycans (3 sites)"/>
</dbReference>
<dbReference type="GlyCosmos" id="O15394">
    <property type="glycosylation" value="8 sites, 7 glycans"/>
</dbReference>
<dbReference type="GlyGen" id="O15394">
    <property type="glycosylation" value="11 sites, 15 N-linked glycans (4 sites)"/>
</dbReference>
<dbReference type="iPTMnet" id="O15394"/>
<dbReference type="PhosphoSitePlus" id="O15394"/>
<dbReference type="SwissPalm" id="O15394"/>
<dbReference type="BioMuta" id="NCAM2"/>
<dbReference type="MassIVE" id="O15394"/>
<dbReference type="PaxDb" id="9606-ENSP00000383392"/>
<dbReference type="PeptideAtlas" id="O15394"/>
<dbReference type="ProteomicsDB" id="48635">
    <molecule id="O15394-1"/>
</dbReference>
<dbReference type="ProteomicsDB" id="6923"/>
<dbReference type="Antibodypedia" id="22282">
    <property type="antibodies" value="301 antibodies from 38 providers"/>
</dbReference>
<dbReference type="DNASU" id="4685"/>
<dbReference type="Ensembl" id="ENST00000400546.6">
    <molecule id="O15394-1"/>
    <property type="protein sequence ID" value="ENSP00000383392.1"/>
    <property type="gene ID" value="ENSG00000154654.15"/>
</dbReference>
<dbReference type="GeneID" id="4685"/>
<dbReference type="KEGG" id="hsa:4685"/>
<dbReference type="MANE-Select" id="ENST00000400546.6">
    <property type="protein sequence ID" value="ENSP00000383392.1"/>
    <property type="RefSeq nucleotide sequence ID" value="NM_004540.5"/>
    <property type="RefSeq protein sequence ID" value="NP_004531.2"/>
</dbReference>
<dbReference type="UCSC" id="uc002yld.3">
    <molecule id="O15394-1"/>
    <property type="organism name" value="human"/>
</dbReference>
<dbReference type="AGR" id="HGNC:7657"/>
<dbReference type="CTD" id="4685"/>
<dbReference type="DisGeNET" id="4685"/>
<dbReference type="GeneCards" id="NCAM2"/>
<dbReference type="HGNC" id="HGNC:7657">
    <property type="gene designation" value="NCAM2"/>
</dbReference>
<dbReference type="HPA" id="ENSG00000154654">
    <property type="expression patterns" value="Tissue enhanced (adrenal gland, brain)"/>
</dbReference>
<dbReference type="MIM" id="602040">
    <property type="type" value="gene"/>
</dbReference>
<dbReference type="neXtProt" id="NX_O15394"/>
<dbReference type="OpenTargets" id="ENSG00000154654"/>
<dbReference type="PharmGKB" id="PA31460"/>
<dbReference type="VEuPathDB" id="HostDB:ENSG00000154654"/>
<dbReference type="eggNOG" id="KOG3510">
    <property type="taxonomic scope" value="Eukaryota"/>
</dbReference>
<dbReference type="GeneTree" id="ENSGT00940000157860"/>
<dbReference type="InParanoid" id="O15394"/>
<dbReference type="OMA" id="HTIELKC"/>
<dbReference type="OrthoDB" id="190835at2759"/>
<dbReference type="PAN-GO" id="O15394">
    <property type="GO annotations" value="1 GO annotation based on evolutionary models"/>
</dbReference>
<dbReference type="PhylomeDB" id="O15394"/>
<dbReference type="TreeFam" id="TF326195"/>
<dbReference type="PathwayCommons" id="O15394"/>
<dbReference type="SignaLink" id="O15394"/>
<dbReference type="BioGRID-ORCS" id="4685">
    <property type="hits" value="12 hits in 1153 CRISPR screens"/>
</dbReference>
<dbReference type="CD-CODE" id="FB4E32DD">
    <property type="entry name" value="Presynaptic clusters and postsynaptic densities"/>
</dbReference>
<dbReference type="ChiTaRS" id="NCAM2">
    <property type="organism name" value="human"/>
</dbReference>
<dbReference type="EvolutionaryTrace" id="O15394"/>
<dbReference type="GenomeRNAi" id="4685"/>
<dbReference type="Pharos" id="O15394">
    <property type="development level" value="Tbio"/>
</dbReference>
<dbReference type="PRO" id="PR:O15394"/>
<dbReference type="Proteomes" id="UP000005640">
    <property type="component" value="Chromosome 21"/>
</dbReference>
<dbReference type="RNAct" id="O15394">
    <property type="molecule type" value="protein"/>
</dbReference>
<dbReference type="Bgee" id="ENSG00000154654">
    <property type="expression patterns" value="Expressed in ventricular zone and 111 other cell types or tissues"/>
</dbReference>
<dbReference type="ExpressionAtlas" id="O15394">
    <property type="expression patterns" value="baseline and differential"/>
</dbReference>
<dbReference type="GO" id="GO:0030424">
    <property type="term" value="C:axon"/>
    <property type="evidence" value="ECO:0007669"/>
    <property type="project" value="Ensembl"/>
</dbReference>
<dbReference type="GO" id="GO:0016020">
    <property type="term" value="C:membrane"/>
    <property type="evidence" value="ECO:0000304"/>
    <property type="project" value="ProtInc"/>
</dbReference>
<dbReference type="GO" id="GO:0043005">
    <property type="term" value="C:neuron projection"/>
    <property type="evidence" value="ECO:0000318"/>
    <property type="project" value="GO_Central"/>
</dbReference>
<dbReference type="GO" id="GO:0016604">
    <property type="term" value="C:nuclear body"/>
    <property type="evidence" value="ECO:0000314"/>
    <property type="project" value="HPA"/>
</dbReference>
<dbReference type="GO" id="GO:0005886">
    <property type="term" value="C:plasma membrane"/>
    <property type="evidence" value="ECO:0000314"/>
    <property type="project" value="HPA"/>
</dbReference>
<dbReference type="GO" id="GO:0097060">
    <property type="term" value="C:synaptic membrane"/>
    <property type="evidence" value="ECO:0007669"/>
    <property type="project" value="Ensembl"/>
</dbReference>
<dbReference type="GO" id="GO:0042802">
    <property type="term" value="F:identical protein binding"/>
    <property type="evidence" value="ECO:0000353"/>
    <property type="project" value="IntAct"/>
</dbReference>
<dbReference type="GO" id="GO:0007413">
    <property type="term" value="P:axonal fasciculation"/>
    <property type="evidence" value="ECO:0007669"/>
    <property type="project" value="Ensembl"/>
</dbReference>
<dbReference type="GO" id="GO:0007158">
    <property type="term" value="P:neuron cell-cell adhesion"/>
    <property type="evidence" value="ECO:0000304"/>
    <property type="project" value="ProtInc"/>
</dbReference>
<dbReference type="CDD" id="cd00063">
    <property type="entry name" value="FN3"/>
    <property type="match status" value="2"/>
</dbReference>
<dbReference type="CDD" id="cd00096">
    <property type="entry name" value="Ig"/>
    <property type="match status" value="1"/>
</dbReference>
<dbReference type="CDD" id="cd20970">
    <property type="entry name" value="IgI_1_MuSK"/>
    <property type="match status" value="1"/>
</dbReference>
<dbReference type="CDD" id="cd05866">
    <property type="entry name" value="IgI_1_NCAM-2"/>
    <property type="match status" value="1"/>
</dbReference>
<dbReference type="CDD" id="cd05870">
    <property type="entry name" value="IgI_NCAM-2"/>
    <property type="match status" value="1"/>
</dbReference>
<dbReference type="FunFam" id="2.60.40.10:FF:000086">
    <property type="entry name" value="Neural cell adhesion molecule 1"/>
    <property type="match status" value="1"/>
</dbReference>
<dbReference type="FunFam" id="2.60.40.10:FF:000381">
    <property type="entry name" value="Neural cell adhesion molecule 2"/>
    <property type="match status" value="1"/>
</dbReference>
<dbReference type="FunFam" id="2.60.40.10:FF:000436">
    <property type="entry name" value="Neural cell adhesion molecule 2"/>
    <property type="match status" value="1"/>
</dbReference>
<dbReference type="FunFam" id="2.60.40.10:FF:000450">
    <property type="entry name" value="Neural cell adhesion molecule 2"/>
    <property type="match status" value="1"/>
</dbReference>
<dbReference type="FunFam" id="2.60.40.10:FF:000528">
    <property type="entry name" value="Neural cell adhesion molecule 2"/>
    <property type="match status" value="1"/>
</dbReference>
<dbReference type="FunFam" id="2.60.40.10:FF:000575">
    <property type="entry name" value="Neural cell adhesion molecule 2"/>
    <property type="match status" value="1"/>
</dbReference>
<dbReference type="FunFam" id="2.60.40.10:FF:000636">
    <property type="entry name" value="Neural cell adhesion molecule 2"/>
    <property type="match status" value="1"/>
</dbReference>
<dbReference type="Gene3D" id="2.60.40.10">
    <property type="entry name" value="Immunoglobulins"/>
    <property type="match status" value="7"/>
</dbReference>
<dbReference type="InterPro" id="IPR003961">
    <property type="entry name" value="FN3_dom"/>
</dbReference>
<dbReference type="InterPro" id="IPR036116">
    <property type="entry name" value="FN3_sf"/>
</dbReference>
<dbReference type="InterPro" id="IPR007110">
    <property type="entry name" value="Ig-like_dom"/>
</dbReference>
<dbReference type="InterPro" id="IPR036179">
    <property type="entry name" value="Ig-like_dom_sf"/>
</dbReference>
<dbReference type="InterPro" id="IPR013783">
    <property type="entry name" value="Ig-like_fold"/>
</dbReference>
<dbReference type="InterPro" id="IPR013098">
    <property type="entry name" value="Ig_I-set"/>
</dbReference>
<dbReference type="InterPro" id="IPR003599">
    <property type="entry name" value="Ig_sub"/>
</dbReference>
<dbReference type="InterPro" id="IPR003598">
    <property type="entry name" value="Ig_sub2"/>
</dbReference>
<dbReference type="InterPro" id="IPR013106">
    <property type="entry name" value="Ig_V-set"/>
</dbReference>
<dbReference type="InterPro" id="IPR051170">
    <property type="entry name" value="Neural/epithelial_adhesion"/>
</dbReference>
<dbReference type="InterPro" id="IPR009138">
    <property type="entry name" value="Neural_cell_adh"/>
</dbReference>
<dbReference type="PANTHER" id="PTHR12231">
    <property type="entry name" value="CTX-RELATED TYPE I TRANSMEMBRANE PROTEIN"/>
    <property type="match status" value="1"/>
</dbReference>
<dbReference type="PANTHER" id="PTHR12231:SF231">
    <property type="entry name" value="NEURAL CELL ADHESION MOLECULE 2"/>
    <property type="match status" value="1"/>
</dbReference>
<dbReference type="Pfam" id="PF00041">
    <property type="entry name" value="fn3"/>
    <property type="match status" value="2"/>
</dbReference>
<dbReference type="Pfam" id="PF07679">
    <property type="entry name" value="I-set"/>
    <property type="match status" value="4"/>
</dbReference>
<dbReference type="Pfam" id="PF13927">
    <property type="entry name" value="Ig_3"/>
    <property type="match status" value="1"/>
</dbReference>
<dbReference type="PRINTS" id="PR01838">
    <property type="entry name" value="NCAMFAMILY"/>
</dbReference>
<dbReference type="SMART" id="SM00060">
    <property type="entry name" value="FN3"/>
    <property type="match status" value="2"/>
</dbReference>
<dbReference type="SMART" id="SM00409">
    <property type="entry name" value="IG"/>
    <property type="match status" value="5"/>
</dbReference>
<dbReference type="SMART" id="SM00408">
    <property type="entry name" value="IGc2"/>
    <property type="match status" value="5"/>
</dbReference>
<dbReference type="SMART" id="SM00406">
    <property type="entry name" value="IGv"/>
    <property type="match status" value="3"/>
</dbReference>
<dbReference type="SUPFAM" id="SSF49265">
    <property type="entry name" value="Fibronectin type III"/>
    <property type="match status" value="1"/>
</dbReference>
<dbReference type="SUPFAM" id="SSF48726">
    <property type="entry name" value="Immunoglobulin"/>
    <property type="match status" value="5"/>
</dbReference>
<dbReference type="PROSITE" id="PS50853">
    <property type="entry name" value="FN3"/>
    <property type="match status" value="2"/>
</dbReference>
<dbReference type="PROSITE" id="PS50835">
    <property type="entry name" value="IG_LIKE"/>
    <property type="match status" value="5"/>
</dbReference>
<sequence>MSLLLSFYLLGLLVSSGQALLQVTISLSKVELSVGESKFFTCTAIGEPESIDWYNPQGEKIISTQRVVVQKEGVRSRLTIYNANIEDAGIYRCQATDAKGQTQEATVVLEIYQKLTFREVVSPQEFKQGEDAEVVCRVSSSPAPAVSWLYHNEEVTTISDNRFAMLANNNLQILNINKSDEGIYRCEGRVEARGEIDFRDIIVIVNVPPAISMPQKSFNATAERGEEMTFSCRASGSPEPAISWFRNGKLIEENEKYILKGSNTELTVRNIINSDGGPYVCRATNKAGEDEKQAFLQVFVQPHIIQLKNETTYENGQVTLVCDAEGEPIPEITWKRAVDGFTFTEGDKSLDGRIEVKGQHGSSSLHIKDVKLSDSGRYDCEAASRIGGHQKSMYLDIEYAPKFISNQTIYYSWEGNPINISCDVKSNPPASIHWRRDKLVLPAKNTTNLKTYSTGRKMILEIAPTSDNDFGRYNCTATNHIGTRFQEYILALADVPSSPYGVKIIELSQTTAKVSFNKPDSHGGVPIHHYQVDVKEVASEIWKIVRSHGVQTMVVLNNLEPNTTYEIRVAAVNGKGQGDYSKIEIFQTLPVREPSPPSIHGQPSSGKSFKLSITKQDDGGAPILEYIVKYRSKDKEDQWLEKKVQGNKDHIILEHLQWTMGYEVQITAANRLGYSEPTVYEFSMPPKPNIIKDTLFNGLGLGAVIGLGVAALLLILVVTDVSCFFIRQCGLLMCITRRMCGKKSGSSGKSKELEEGKAAYLKDGSKEPIVEMRTEDERVTNHEDGSPVNEPNETTPLTEPEKLPLKEEDGKEALNPETIEIKVSNDIIQSKEDDSKA</sequence>
<accession>O15394</accession>
<accession>A8MQ06</accession>
<accession>B7Z841</accession>
<accession>Q7Z7F2</accession>